<comment type="function">
    <text evidence="1">A P subtype restriction enzyme that recognizes the double-stranded sequence 5'-GGNNCC-3'; the cleavage site is unknown.</text>
</comment>
<comment type="catalytic activity">
    <reaction>
        <text>Endonucleolytic cleavage of DNA to give specific double-stranded fragments with terminal 5'-phosphates.</text>
        <dbReference type="EC" id="3.1.21.4"/>
    </reaction>
</comment>
<sequence>MIKLTAQQIFDKLLDEEKILSANGQIRFFLGDVDIIVKQKDVVGNIIQEWLGGWLRKREIEFDVSTNTQMPPDFFLNKKDRSRELLEVKAFNRNACPGFDIADFKMYSDESFISPISGCRLFNIGYDMDDNGNVTIKDLWLKKVWQITRSMDGWAINFKSKKAWCIKSARVFGTA</sequence>
<keyword id="KW-0255">Endonuclease</keyword>
<keyword id="KW-0378">Hydrolase</keyword>
<keyword id="KW-0540">Nuclease</keyword>
<keyword id="KW-0680">Restriction system</keyword>
<protein>
    <recommendedName>
        <fullName evidence="1">Type II restriction enzyme NgoBV</fullName>
        <shortName>R.NgoBV</shortName>
        <ecNumber>3.1.21.4</ecNumber>
    </recommendedName>
    <alternativeName>
        <fullName>Endonuclease NgoBV</fullName>
    </alternativeName>
    <alternativeName>
        <fullName>R.NgoV</fullName>
    </alternativeName>
    <alternativeName>
        <fullName evidence="2">S.NgoV</fullName>
    </alternativeName>
    <alternativeName>
        <fullName>Type-2 restriction enzyme NgoBV</fullName>
    </alternativeName>
</protein>
<gene>
    <name type="primary">ngoBVR</name>
    <name type="synonym">dcrE</name>
</gene>
<reference key="1">
    <citation type="journal article" date="1995" name="Gene">
        <title>Restriction and modification systems of Neisseria gonorrhoeae.</title>
        <authorList>
            <person name="Stein D.C."/>
            <person name="Gunn J.S."/>
            <person name="Radlinska M."/>
            <person name="Piekarowicz A."/>
        </authorList>
    </citation>
    <scope>NUCLEOTIDE SEQUENCE [GENOMIC DNA]</scope>
    <source>
        <strain>WR302</strain>
    </source>
</reference>
<reference key="2">
    <citation type="journal article" date="2003" name="Nucleic Acids Res.">
        <title>A nomenclature for restriction enzymes, DNA methyltransferases, homing endonucleases and their genes.</title>
        <authorList>
            <person name="Roberts R.J."/>
            <person name="Belfort M."/>
            <person name="Bestor T."/>
            <person name="Bhagwat A.S."/>
            <person name="Bickle T.A."/>
            <person name="Bitinaite J."/>
            <person name="Blumenthal R.M."/>
            <person name="Degtyarev S.K."/>
            <person name="Dryden D.T."/>
            <person name="Dybvig K."/>
            <person name="Firman K."/>
            <person name="Gromova E.S."/>
            <person name="Gumport R.I."/>
            <person name="Halford S.E."/>
            <person name="Hattman S."/>
            <person name="Heitman J."/>
            <person name="Hornby D.P."/>
            <person name="Janulaitis A."/>
            <person name="Jeltsch A."/>
            <person name="Josephsen J."/>
            <person name="Kiss A."/>
            <person name="Klaenhammer T.R."/>
            <person name="Kobayashi I."/>
            <person name="Kong H."/>
            <person name="Krueger D.H."/>
            <person name="Lacks S."/>
            <person name="Marinus M.G."/>
            <person name="Miyahara M."/>
            <person name="Morgan R.D."/>
            <person name="Murray N.E."/>
            <person name="Nagaraja V."/>
            <person name="Piekarowicz A."/>
            <person name="Pingoud A."/>
            <person name="Raleigh E."/>
            <person name="Rao D.N."/>
            <person name="Reich N."/>
            <person name="Repin V.E."/>
            <person name="Selker E.U."/>
            <person name="Shaw P.C."/>
            <person name="Stein D.C."/>
            <person name="Stoddard B.L."/>
            <person name="Szybalski W."/>
            <person name="Trautner T.A."/>
            <person name="Van Etten J.L."/>
            <person name="Vitor J.M."/>
            <person name="Wilson G.G."/>
            <person name="Xu S.Y."/>
        </authorList>
    </citation>
    <scope>NOMENCLATURE</scope>
    <scope>SUBTYPE</scope>
</reference>
<accession>Q50975</accession>
<proteinExistence type="predicted"/>
<feature type="chain" id="PRO_0000077345" description="Type II restriction enzyme NgoBV">
    <location>
        <begin position="1"/>
        <end position="175" status="greater than"/>
    </location>
</feature>
<feature type="non-terminal residue">
    <location>
        <position position="175"/>
    </location>
</feature>
<dbReference type="EC" id="3.1.21.4"/>
<dbReference type="EMBL" id="U43735">
    <property type="protein sequence ID" value="AAA86269.1"/>
    <property type="molecule type" value="Genomic_DNA"/>
</dbReference>
<dbReference type="SMR" id="Q50975"/>
<dbReference type="REBASE" id="3134">
    <property type="entry name" value="NgoBV"/>
</dbReference>
<dbReference type="GO" id="GO:0009036">
    <property type="term" value="F:type II site-specific deoxyribonuclease activity"/>
    <property type="evidence" value="ECO:0007669"/>
    <property type="project" value="UniProtKB-EC"/>
</dbReference>
<dbReference type="GO" id="GO:0009307">
    <property type="term" value="P:DNA restriction-modification system"/>
    <property type="evidence" value="ECO:0007669"/>
    <property type="project" value="UniProtKB-KW"/>
</dbReference>
<dbReference type="InterPro" id="IPR019064">
    <property type="entry name" value="Restrct_endonuc_II_NlaIV"/>
</dbReference>
<dbReference type="Pfam" id="PF09564">
    <property type="entry name" value="RE_NgoBV"/>
    <property type="match status" value="1"/>
</dbReference>
<organism>
    <name type="scientific">Neisseria gonorrhoeae</name>
    <dbReference type="NCBI Taxonomy" id="485"/>
    <lineage>
        <taxon>Bacteria</taxon>
        <taxon>Pseudomonadati</taxon>
        <taxon>Pseudomonadota</taxon>
        <taxon>Betaproteobacteria</taxon>
        <taxon>Neisseriales</taxon>
        <taxon>Neisseriaceae</taxon>
        <taxon>Neisseria</taxon>
    </lineage>
</organism>
<evidence type="ECO:0000303" key="1">
    <source>
    </source>
</evidence>
<evidence type="ECO:0000303" key="2">
    <source>
    </source>
</evidence>
<name>T2B5_NEIGO</name>